<protein>
    <recommendedName>
        <fullName>Phthiocerol/phthiodiolone dimycocerosyl transferase</fullName>
        <ecNumber evidence="2">2.3.1.282</ecNumber>
    </recommendedName>
    <alternativeName>
        <fullName>Acyltransferase PapA5</fullName>
    </alternativeName>
    <alternativeName>
        <fullName>Phthiocerol/phthiodiolone O-acyltransferase</fullName>
    </alternativeName>
    <alternativeName>
        <fullName>Polyketide synthase-associated protein A5</fullName>
    </alternativeName>
</protein>
<name>PAPA5_MYCBO</name>
<proteinExistence type="inferred from homology"/>
<reference key="1">
    <citation type="journal article" date="1992" name="J. Biol. Chem.">
        <title>Molecular cloning and sequencing of the gene for mycocerosic acid synthase, a novel fatty acid elongating multifunctional enzyme, from Mycobacterium tuberculosis var. bovis Bacillus Calmette-Guerin.</title>
        <authorList>
            <person name="Mathur M."/>
            <person name="Kolattukudy P.E."/>
        </authorList>
    </citation>
    <scope>NUCLEOTIDE SEQUENCE [GENOMIC DNA]</scope>
    <source>
        <strain>BCG</strain>
    </source>
</reference>
<reference key="2">
    <citation type="journal article" date="2003" name="Proc. Natl. Acad. Sci. U.S.A.">
        <title>The complete genome sequence of Mycobacterium bovis.</title>
        <authorList>
            <person name="Garnier T."/>
            <person name="Eiglmeier K."/>
            <person name="Camus J.-C."/>
            <person name="Medina N."/>
            <person name="Mansoor H."/>
            <person name="Pryor M."/>
            <person name="Duthoy S."/>
            <person name="Grondin S."/>
            <person name="Lacroix C."/>
            <person name="Monsempe C."/>
            <person name="Simon S."/>
            <person name="Harris B."/>
            <person name="Atkin R."/>
            <person name="Doggett J."/>
            <person name="Mayes R."/>
            <person name="Keating L."/>
            <person name="Wheeler P.R."/>
            <person name="Parkhill J."/>
            <person name="Barrell B.G."/>
            <person name="Cole S.T."/>
            <person name="Gordon S.V."/>
            <person name="Hewinson R.G."/>
        </authorList>
    </citation>
    <scope>NUCLEOTIDE SEQUENCE [LARGE SCALE GENOMIC DNA]</scope>
    <source>
        <strain>ATCC BAA-935 / AF2122/97</strain>
    </source>
</reference>
<reference key="3">
    <citation type="journal article" date="2017" name="Genome Announc.">
        <title>Updated reference genome sequence and annotation of Mycobacterium bovis AF2122/97.</title>
        <authorList>
            <person name="Malone K.M."/>
            <person name="Farrell D."/>
            <person name="Stuber T.P."/>
            <person name="Schubert O.T."/>
            <person name="Aebersold R."/>
            <person name="Robbe-Austerman S."/>
            <person name="Gordon S.V."/>
        </authorList>
    </citation>
    <scope>NUCLEOTIDE SEQUENCE [LARGE SCALE GENOMIC DNA]</scope>
    <scope>GENOME REANNOTATION</scope>
    <source>
        <strain>ATCC BAA-935 / AF2122/97</strain>
    </source>
</reference>
<dbReference type="EC" id="2.3.1.282" evidence="2"/>
<dbReference type="EMBL" id="M95808">
    <property type="protein sequence ID" value="AAA25370.1"/>
    <property type="status" value="ALT_FRAME"/>
    <property type="molecule type" value="Genomic_DNA"/>
</dbReference>
<dbReference type="EMBL" id="LT708304">
    <property type="protein sequence ID" value="SIU01585.1"/>
    <property type="molecule type" value="Genomic_DNA"/>
</dbReference>
<dbReference type="RefSeq" id="NP_856609.1">
    <property type="nucleotide sequence ID" value="NC_002945.3"/>
</dbReference>
<dbReference type="RefSeq" id="WP_003414853.1">
    <property type="nucleotide sequence ID" value="NC_002945.4"/>
</dbReference>
<dbReference type="SMR" id="Q02279"/>
<dbReference type="KEGG" id="mbo:BQ2027_MB2964"/>
<dbReference type="PATRIC" id="fig|233413.5.peg.3253"/>
<dbReference type="Proteomes" id="UP000001419">
    <property type="component" value="Chromosome"/>
</dbReference>
<dbReference type="GO" id="GO:0016746">
    <property type="term" value="F:acyltransferase activity"/>
    <property type="evidence" value="ECO:0007669"/>
    <property type="project" value="UniProtKB-KW"/>
</dbReference>
<dbReference type="GO" id="GO:0006629">
    <property type="term" value="P:lipid metabolic process"/>
    <property type="evidence" value="ECO:0007669"/>
    <property type="project" value="UniProtKB-KW"/>
</dbReference>
<dbReference type="Gene3D" id="3.30.559.10">
    <property type="entry name" value="Chloramphenicol acetyltransferase-like domain"/>
    <property type="match status" value="1"/>
</dbReference>
<dbReference type="Gene3D" id="3.30.559.30">
    <property type="entry name" value="Nonribosomal peptide synthetase, condensation domain"/>
    <property type="match status" value="1"/>
</dbReference>
<dbReference type="InterPro" id="IPR023213">
    <property type="entry name" value="CAT-like_dom_sf"/>
</dbReference>
<dbReference type="InterPro" id="IPR031641">
    <property type="entry name" value="PapA_C"/>
</dbReference>
<dbReference type="NCBIfam" id="NF006788">
    <property type="entry name" value="PRK09294.1-2"/>
    <property type="match status" value="1"/>
</dbReference>
<dbReference type="Pfam" id="PF16911">
    <property type="entry name" value="PapA_C"/>
    <property type="match status" value="1"/>
</dbReference>
<dbReference type="SUPFAM" id="SSF52777">
    <property type="entry name" value="CoA-dependent acyltransferases"/>
    <property type="match status" value="2"/>
</dbReference>
<comment type="function">
    <text evidence="2">Catalyzes diesterification of phthiocerol, phthiodiolone, and phenolphthiocerol with mycocerosic acids, the final step in the phthiocerol, phthiodiolone and phenolphthiocerol dimycocerosate esters (PDIM) synthesis. Can directly transfer the mycocerosate bound to the mycocerosic acid synthase (mas) onto the substrate alcohols.</text>
</comment>
<comment type="catalytic activity">
    <reaction evidence="2">
        <text>2 a mycocerosyl-[mycocerosic acid synthase] + a phthiocerol = a dimycocerosyl phthiocerol + 2 holo-[mycocerosic acid synthase].</text>
        <dbReference type="EC" id="2.3.1.282"/>
    </reaction>
</comment>
<comment type="catalytic activity">
    <reaction evidence="2">
        <text>2 a mycocerosyl-[mycocerosic acid synthase] + a phthiodiolone = a dimycocerosyl phthiodiolone + 2 holo-[mycocerosic acid synthase].</text>
        <dbReference type="EC" id="2.3.1.282"/>
    </reaction>
</comment>
<comment type="catalytic activity">
    <reaction evidence="2">
        <text>2 a mycocerosyl-[mycocerosic acid synthase] + a phenolphthiocerol = a dimycocerosyl phenolphthiocerol + 2 holo-[mycocerosic acid synthase].</text>
        <dbReference type="EC" id="2.3.1.282"/>
    </reaction>
</comment>
<comment type="subunit">
    <text evidence="2">Monomer. Interacts directly with the acyl carrier protein (ACP) domain of the mycocerosic acid synthase (mas) protein.</text>
</comment>
<comment type="domain">
    <text evidence="2">Consists of two structural domains that are related to each other.</text>
</comment>
<comment type="similarity">
    <text evidence="3">Belongs to the acyltransferase PapA5 family.</text>
</comment>
<comment type="sequence caution" evidence="3">
    <conflict type="frameshift">
        <sequence resource="EMBL-CDS" id="AAA25370"/>
    </conflict>
</comment>
<keyword id="KW-0012">Acyltransferase</keyword>
<keyword id="KW-0444">Lipid biosynthesis</keyword>
<keyword id="KW-0443">Lipid metabolism</keyword>
<keyword id="KW-1185">Reference proteome</keyword>
<keyword id="KW-0808">Transferase</keyword>
<feature type="chain" id="PRO_0000058228" description="Phthiocerol/phthiodiolone dimycocerosyl transferase">
    <location>
        <begin position="1"/>
        <end position="422"/>
    </location>
</feature>
<feature type="active site" description="Proton acceptor" evidence="1">
    <location>
        <position position="124"/>
    </location>
</feature>
<feature type="site" description="Structural role in the organization of the active site" evidence="1">
    <location>
        <position position="128"/>
    </location>
</feature>
<feature type="site" description="Important for mas ACP domain recognition" evidence="1">
    <location>
        <position position="312"/>
    </location>
</feature>
<feature type="sequence conflict" description="In Ref. 1; AAA25370." evidence="3" ref="1">
    <original>G</original>
    <variation>R</variation>
    <location>
        <position position="32"/>
    </location>
</feature>
<feature type="sequence conflict" description="In Ref. 1; AAA25370." evidence="3" ref="1">
    <original>L</original>
    <variation>H</variation>
    <location>
        <position position="96"/>
    </location>
</feature>
<feature type="sequence conflict" description="In Ref. 1; AAA25370." evidence="3" ref="1">
    <original>IL</original>
    <variation>MV</variation>
    <location>
        <begin position="110"/>
        <end position="111"/>
    </location>
</feature>
<feature type="sequence conflict" description="In Ref. 1; AAA25370." evidence="3" ref="1">
    <original>V</original>
    <variation>G</variation>
    <location>
        <position position="134"/>
    </location>
</feature>
<feature type="sequence conflict" description="In Ref. 1; AAA25370." evidence="3" ref="1">
    <original>QL</original>
    <variation>HV</variation>
    <location>
        <begin position="251"/>
        <end position="252"/>
    </location>
</feature>
<gene>
    <name type="primary">papA5</name>
    <name type="ordered locus">BQ2027_MB2964</name>
</gene>
<sequence length="422" mass="45429">MFPGSVIRKLSHSEEVFAQYEVFTSMTIQLRGVIDVDALSDAFDALLETHPVLASHLEQSSDGGWNLVADDLLHSGICVIDGTAATNGSPSGNAELRLDQSVSLLHLQLILREGGAELTLYLHHCMADGHHGAVLVDELFSRYTDAVTTGDPGPITPQPTPLSMEAVLAQRGIRKQGLSGAERFMSVMYAYEIPATETPAVLAHPGLPQAVPVTRLWLSKQQTSDLMAFGREHRLSLNAVVAAAILLTEWQLRNTPHVPIPYVYPVDLRFVLAPPVAPTEATNLLGAASYLAEIGPNTDIVDLASDIVATLRADLANGVIQQSGLHFGTAFEGTPPGLPPLVFCTDATSFPTMRTPPGLEIEDIKGQFYCSISVPLDLYSCAVYAGQLIIEHHGHIAEPGKSLEAIRSLLCTVPSEYGWIME</sequence>
<accession>Q02279</accession>
<accession>A0A1R3Y4M0</accession>
<accession>Q7TXL2</accession>
<accession>X2BMV2</accession>
<organism>
    <name type="scientific">Mycobacterium bovis (strain ATCC BAA-935 / AF2122/97)</name>
    <dbReference type="NCBI Taxonomy" id="233413"/>
    <lineage>
        <taxon>Bacteria</taxon>
        <taxon>Bacillati</taxon>
        <taxon>Actinomycetota</taxon>
        <taxon>Actinomycetes</taxon>
        <taxon>Mycobacteriales</taxon>
        <taxon>Mycobacteriaceae</taxon>
        <taxon>Mycobacterium</taxon>
        <taxon>Mycobacterium tuberculosis complex</taxon>
    </lineage>
</organism>
<evidence type="ECO:0000250" key="1"/>
<evidence type="ECO:0000250" key="2">
    <source>
        <dbReference type="UniProtKB" id="P9WIN5"/>
    </source>
</evidence>
<evidence type="ECO:0000305" key="3"/>